<keyword id="KW-1003">Cell membrane</keyword>
<keyword id="KW-0472">Membrane</keyword>
<keyword id="KW-0552">Olfaction</keyword>
<keyword id="KW-0675">Receptor</keyword>
<keyword id="KW-1185">Reference proteome</keyword>
<keyword id="KW-0716">Sensory transduction</keyword>
<keyword id="KW-0807">Transducer</keyword>
<keyword id="KW-0812">Transmembrane</keyword>
<keyword id="KW-1133">Transmembrane helix</keyword>
<name>OR94B_DROME</name>
<sequence length="383" mass="45262">MESTNRLSAIQTLLVIQRWIGLLKWENEGEDGVLTWLKRIYPFVLHLPLTFTYIALMWYEAITSSDFEEAGQVLYMSITELALVTKLLNIWYRRHEAASLIHELQHDPAFNLRNSEEIKFWQQNQRNFKRIFYWYIWGSLFVAVMGYISVFFQEDYELPFGYYVPFEWRTRERYFYAWGYNVVAMTLCCLSNILLDTLGCYFMFHIASLFRLLGMRLEALKNAAEEKARPELRRIFQLHTKVRRLTRECEVLVSPYVLSQVVFSAFIICFSAYRLVHMGFKQRPGLFVTTVQFVAVMIVQIFLPCYYGNELTFHANALTNSVFGTNWLEYSVGTRKLLNCYMEFLKRPVKVRAGVFFEIGLPIFVKTINNAYSFFALLLKISK</sequence>
<reference key="1">
    <citation type="journal article" date="2000" name="Science">
        <title>The genome sequence of Drosophila melanogaster.</title>
        <authorList>
            <person name="Adams M.D."/>
            <person name="Celniker S.E."/>
            <person name="Holt R.A."/>
            <person name="Evans C.A."/>
            <person name="Gocayne J.D."/>
            <person name="Amanatides P.G."/>
            <person name="Scherer S.E."/>
            <person name="Li P.W."/>
            <person name="Hoskins R.A."/>
            <person name="Galle R.F."/>
            <person name="George R.A."/>
            <person name="Lewis S.E."/>
            <person name="Richards S."/>
            <person name="Ashburner M."/>
            <person name="Henderson S.N."/>
            <person name="Sutton G.G."/>
            <person name="Wortman J.R."/>
            <person name="Yandell M.D."/>
            <person name="Zhang Q."/>
            <person name="Chen L.X."/>
            <person name="Brandon R.C."/>
            <person name="Rogers Y.-H.C."/>
            <person name="Blazej R.G."/>
            <person name="Champe M."/>
            <person name="Pfeiffer B.D."/>
            <person name="Wan K.H."/>
            <person name="Doyle C."/>
            <person name="Baxter E.G."/>
            <person name="Helt G."/>
            <person name="Nelson C.R."/>
            <person name="Miklos G.L.G."/>
            <person name="Abril J.F."/>
            <person name="Agbayani A."/>
            <person name="An H.-J."/>
            <person name="Andrews-Pfannkoch C."/>
            <person name="Baldwin D."/>
            <person name="Ballew R.M."/>
            <person name="Basu A."/>
            <person name="Baxendale J."/>
            <person name="Bayraktaroglu L."/>
            <person name="Beasley E.M."/>
            <person name="Beeson K.Y."/>
            <person name="Benos P.V."/>
            <person name="Berman B.P."/>
            <person name="Bhandari D."/>
            <person name="Bolshakov S."/>
            <person name="Borkova D."/>
            <person name="Botchan M.R."/>
            <person name="Bouck J."/>
            <person name="Brokstein P."/>
            <person name="Brottier P."/>
            <person name="Burtis K.C."/>
            <person name="Busam D.A."/>
            <person name="Butler H."/>
            <person name="Cadieu E."/>
            <person name="Center A."/>
            <person name="Chandra I."/>
            <person name="Cherry J.M."/>
            <person name="Cawley S."/>
            <person name="Dahlke C."/>
            <person name="Davenport L.B."/>
            <person name="Davies P."/>
            <person name="de Pablos B."/>
            <person name="Delcher A."/>
            <person name="Deng Z."/>
            <person name="Mays A.D."/>
            <person name="Dew I."/>
            <person name="Dietz S.M."/>
            <person name="Dodson K."/>
            <person name="Doup L.E."/>
            <person name="Downes M."/>
            <person name="Dugan-Rocha S."/>
            <person name="Dunkov B.C."/>
            <person name="Dunn P."/>
            <person name="Durbin K.J."/>
            <person name="Evangelista C.C."/>
            <person name="Ferraz C."/>
            <person name="Ferriera S."/>
            <person name="Fleischmann W."/>
            <person name="Fosler C."/>
            <person name="Gabrielian A.E."/>
            <person name="Garg N.S."/>
            <person name="Gelbart W.M."/>
            <person name="Glasser K."/>
            <person name="Glodek A."/>
            <person name="Gong F."/>
            <person name="Gorrell J.H."/>
            <person name="Gu Z."/>
            <person name="Guan P."/>
            <person name="Harris M."/>
            <person name="Harris N.L."/>
            <person name="Harvey D.A."/>
            <person name="Heiman T.J."/>
            <person name="Hernandez J.R."/>
            <person name="Houck J."/>
            <person name="Hostin D."/>
            <person name="Houston K.A."/>
            <person name="Howland T.J."/>
            <person name="Wei M.-H."/>
            <person name="Ibegwam C."/>
            <person name="Jalali M."/>
            <person name="Kalush F."/>
            <person name="Karpen G.H."/>
            <person name="Ke Z."/>
            <person name="Kennison J.A."/>
            <person name="Ketchum K.A."/>
            <person name="Kimmel B.E."/>
            <person name="Kodira C.D."/>
            <person name="Kraft C.L."/>
            <person name="Kravitz S."/>
            <person name="Kulp D."/>
            <person name="Lai Z."/>
            <person name="Lasko P."/>
            <person name="Lei Y."/>
            <person name="Levitsky A.A."/>
            <person name="Li J.H."/>
            <person name="Li Z."/>
            <person name="Liang Y."/>
            <person name="Lin X."/>
            <person name="Liu X."/>
            <person name="Mattei B."/>
            <person name="McIntosh T.C."/>
            <person name="McLeod M.P."/>
            <person name="McPherson D."/>
            <person name="Merkulov G."/>
            <person name="Milshina N.V."/>
            <person name="Mobarry C."/>
            <person name="Morris J."/>
            <person name="Moshrefi A."/>
            <person name="Mount S.M."/>
            <person name="Moy M."/>
            <person name="Murphy B."/>
            <person name="Murphy L."/>
            <person name="Muzny D.M."/>
            <person name="Nelson D.L."/>
            <person name="Nelson D.R."/>
            <person name="Nelson K.A."/>
            <person name="Nixon K."/>
            <person name="Nusskern D.R."/>
            <person name="Pacleb J.M."/>
            <person name="Palazzolo M."/>
            <person name="Pittman G.S."/>
            <person name="Pan S."/>
            <person name="Pollard J."/>
            <person name="Puri V."/>
            <person name="Reese M.G."/>
            <person name="Reinert K."/>
            <person name="Remington K."/>
            <person name="Saunders R.D.C."/>
            <person name="Scheeler F."/>
            <person name="Shen H."/>
            <person name="Shue B.C."/>
            <person name="Siden-Kiamos I."/>
            <person name="Simpson M."/>
            <person name="Skupski M.P."/>
            <person name="Smith T.J."/>
            <person name="Spier E."/>
            <person name="Spradling A.C."/>
            <person name="Stapleton M."/>
            <person name="Strong R."/>
            <person name="Sun E."/>
            <person name="Svirskas R."/>
            <person name="Tector C."/>
            <person name="Turner R."/>
            <person name="Venter E."/>
            <person name="Wang A.H."/>
            <person name="Wang X."/>
            <person name="Wang Z.-Y."/>
            <person name="Wassarman D.A."/>
            <person name="Weinstock G.M."/>
            <person name="Weissenbach J."/>
            <person name="Williams S.M."/>
            <person name="Woodage T."/>
            <person name="Worley K.C."/>
            <person name="Wu D."/>
            <person name="Yang S."/>
            <person name="Yao Q.A."/>
            <person name="Ye J."/>
            <person name="Yeh R.-F."/>
            <person name="Zaveri J.S."/>
            <person name="Zhan M."/>
            <person name="Zhang G."/>
            <person name="Zhao Q."/>
            <person name="Zheng L."/>
            <person name="Zheng X.H."/>
            <person name="Zhong F.N."/>
            <person name="Zhong W."/>
            <person name="Zhou X."/>
            <person name="Zhu S.C."/>
            <person name="Zhu X."/>
            <person name="Smith H.O."/>
            <person name="Gibbs R.A."/>
            <person name="Myers E.W."/>
            <person name="Rubin G.M."/>
            <person name="Venter J.C."/>
        </authorList>
    </citation>
    <scope>NUCLEOTIDE SEQUENCE [LARGE SCALE GENOMIC DNA]</scope>
    <source>
        <strain>Berkeley</strain>
    </source>
</reference>
<reference key="2">
    <citation type="journal article" date="2002" name="Genome Biol.">
        <title>Annotation of the Drosophila melanogaster euchromatic genome: a systematic review.</title>
        <authorList>
            <person name="Misra S."/>
            <person name="Crosby M.A."/>
            <person name="Mungall C.J."/>
            <person name="Matthews B.B."/>
            <person name="Campbell K.S."/>
            <person name="Hradecky P."/>
            <person name="Huang Y."/>
            <person name="Kaminker J.S."/>
            <person name="Millburn G.H."/>
            <person name="Prochnik S.E."/>
            <person name="Smith C.D."/>
            <person name="Tupy J.L."/>
            <person name="Whitfield E.J."/>
            <person name="Bayraktaroglu L."/>
            <person name="Berman B.P."/>
            <person name="Bettencourt B.R."/>
            <person name="Celniker S.E."/>
            <person name="de Grey A.D.N.J."/>
            <person name="Drysdale R.A."/>
            <person name="Harris N.L."/>
            <person name="Richter J."/>
            <person name="Russo S."/>
            <person name="Schroeder A.J."/>
            <person name="Shu S.Q."/>
            <person name="Stapleton M."/>
            <person name="Yamada C."/>
            <person name="Ashburner M."/>
            <person name="Gelbart W.M."/>
            <person name="Rubin G.M."/>
            <person name="Lewis S.E."/>
        </authorList>
    </citation>
    <scope>GENOME REANNOTATION</scope>
    <source>
        <strain>Berkeley</strain>
    </source>
</reference>
<reference key="3">
    <citation type="journal article" date="2011" name="J. Neurosci.">
        <title>Similar odorants elicit different behavioral and physiological responses, some supersustained.</title>
        <authorList>
            <person name="Montague S.A."/>
            <person name="Mathew D."/>
            <person name="Carlson J.R."/>
        </authorList>
    </citation>
    <scope>FUNCTION</scope>
</reference>
<comment type="function">
    <text evidence="3">Odorant receptor which mediates acceptance or avoidance behavior, depending on its substrates. The odorant receptor repertoire encodes a large collection of odor stimuli that vary widely in identity, intensity, and duration. May form a complex with Orco to form odorant-sensing units, providing sensitive and prolonged odorant signaling and calcium permeability.</text>
</comment>
<comment type="subunit">
    <text evidence="1">Interacts with Orco. Complexes exist early in the endomembrane system in olfactory sensory neurons (OSNs), coupling these complexes to the conserved ciliary trafficking pathway (By similarity).</text>
</comment>
<comment type="subcellular location">
    <subcellularLocation>
        <location evidence="1">Cell membrane</location>
        <topology evidence="1">Multi-pass membrane protein</topology>
    </subcellularLocation>
</comment>
<comment type="miscellaneous">
    <text>The atypical heteromeric and topological design of the odorant receptors appears to be an insect-specific solution for odor recognition, making the OR/Orco complex an attractive target for the development of highly selective insect repellents to disrupt olfactory-mediated host-seeking behaviors of insect disease vectors. Odor-evoked OR currents are independent of known G-protein-coupled second messenger pathways.</text>
</comment>
<comment type="similarity">
    <text evidence="4">Belongs to the insect chemoreceptor superfamily. Heteromeric odorant receptor channel (TC 1.A.69) family. Or2a subfamily.</text>
</comment>
<protein>
    <recommendedName>
        <fullName>Odorant receptor 94b</fullName>
    </recommendedName>
</protein>
<gene>
    <name type="primary">Or94b</name>
    <name type="ORF">CG6679</name>
</gene>
<evidence type="ECO:0000250" key="1"/>
<evidence type="ECO:0000255" key="2"/>
<evidence type="ECO:0000269" key="3">
    <source>
    </source>
</evidence>
<evidence type="ECO:0000305" key="4"/>
<organism>
    <name type="scientific">Drosophila melanogaster</name>
    <name type="common">Fruit fly</name>
    <dbReference type="NCBI Taxonomy" id="7227"/>
    <lineage>
        <taxon>Eukaryota</taxon>
        <taxon>Metazoa</taxon>
        <taxon>Ecdysozoa</taxon>
        <taxon>Arthropoda</taxon>
        <taxon>Hexapoda</taxon>
        <taxon>Insecta</taxon>
        <taxon>Pterygota</taxon>
        <taxon>Neoptera</taxon>
        <taxon>Endopterygota</taxon>
        <taxon>Diptera</taxon>
        <taxon>Brachycera</taxon>
        <taxon>Muscomorpha</taxon>
        <taxon>Ephydroidea</taxon>
        <taxon>Drosophilidae</taxon>
        <taxon>Drosophila</taxon>
        <taxon>Sophophora</taxon>
    </lineage>
</organism>
<proteinExistence type="inferred from homology"/>
<dbReference type="EMBL" id="AE014297">
    <property type="protein sequence ID" value="AAF56077.1"/>
    <property type="molecule type" value="Genomic_DNA"/>
</dbReference>
<dbReference type="RefSeq" id="NP_524456.1">
    <property type="nucleotide sequence ID" value="NM_079732.1"/>
</dbReference>
<dbReference type="SMR" id="Q9VCS8"/>
<dbReference type="FunCoup" id="Q9VCS8">
    <property type="interactions" value="41"/>
</dbReference>
<dbReference type="STRING" id="7227.FBpp0083735"/>
<dbReference type="PaxDb" id="7227-FBpp0083735"/>
<dbReference type="EnsemblMetazoa" id="FBtr0084342">
    <property type="protein sequence ID" value="FBpp0083735"/>
    <property type="gene ID" value="FBgn0039034"/>
</dbReference>
<dbReference type="GeneID" id="42712"/>
<dbReference type="KEGG" id="dme:Dmel_CG6679"/>
<dbReference type="AGR" id="FB:FBgn0039034"/>
<dbReference type="CTD" id="42712"/>
<dbReference type="FlyBase" id="FBgn0039034">
    <property type="gene designation" value="Or94b"/>
</dbReference>
<dbReference type="VEuPathDB" id="VectorBase:FBgn0039034"/>
<dbReference type="eggNOG" id="ENOG502SV87">
    <property type="taxonomic scope" value="Eukaryota"/>
</dbReference>
<dbReference type="GeneTree" id="ENSGT00530000064740"/>
<dbReference type="HOGENOM" id="CLU_033399_6_3_1"/>
<dbReference type="InParanoid" id="Q9VCS8"/>
<dbReference type="OMA" id="GCYFMFH"/>
<dbReference type="OrthoDB" id="7548151at2759"/>
<dbReference type="PhylomeDB" id="Q9VCS8"/>
<dbReference type="BioGRID-ORCS" id="42712">
    <property type="hits" value="0 hits in 1 CRISPR screen"/>
</dbReference>
<dbReference type="GenomeRNAi" id="42712"/>
<dbReference type="PRO" id="PR:Q9VCS8"/>
<dbReference type="Proteomes" id="UP000000803">
    <property type="component" value="Chromosome 3R"/>
</dbReference>
<dbReference type="Bgee" id="FBgn0039034">
    <property type="expression patterns" value="Expressed in adult Malpighian tubule bar-shaped cell of initial segment in Malpighian tubule and 2 other cell types or tissues"/>
</dbReference>
<dbReference type="ExpressionAtlas" id="Q9VCS8">
    <property type="expression patterns" value="baseline and differential"/>
</dbReference>
<dbReference type="GO" id="GO:0032590">
    <property type="term" value="C:dendrite membrane"/>
    <property type="evidence" value="ECO:0000250"/>
    <property type="project" value="FlyBase"/>
</dbReference>
<dbReference type="GO" id="GO:0005886">
    <property type="term" value="C:plasma membrane"/>
    <property type="evidence" value="ECO:0000318"/>
    <property type="project" value="GO_Central"/>
</dbReference>
<dbReference type="GO" id="GO:0170020">
    <property type="term" value="F:ionotropic olfactory receptor activity"/>
    <property type="evidence" value="ECO:0000314"/>
    <property type="project" value="FlyBase"/>
</dbReference>
<dbReference type="GO" id="GO:0099604">
    <property type="term" value="F:ligand-gated calcium channel activity"/>
    <property type="evidence" value="ECO:0000314"/>
    <property type="project" value="FlyBase"/>
</dbReference>
<dbReference type="GO" id="GO:0005549">
    <property type="term" value="F:odorant binding"/>
    <property type="evidence" value="ECO:0000250"/>
    <property type="project" value="FlyBase"/>
</dbReference>
<dbReference type="GO" id="GO:0004984">
    <property type="term" value="F:olfactory receptor activity"/>
    <property type="evidence" value="ECO:0000318"/>
    <property type="project" value="GO_Central"/>
</dbReference>
<dbReference type="GO" id="GO:0070588">
    <property type="term" value="P:calcium ion transmembrane transport"/>
    <property type="evidence" value="ECO:0000314"/>
    <property type="project" value="FlyBase"/>
</dbReference>
<dbReference type="GO" id="GO:0050911">
    <property type="term" value="P:detection of chemical stimulus involved in sensory perception of smell"/>
    <property type="evidence" value="ECO:0000314"/>
    <property type="project" value="FlyBase"/>
</dbReference>
<dbReference type="InterPro" id="IPR004117">
    <property type="entry name" value="7tm6_olfct_rcpt"/>
</dbReference>
<dbReference type="PANTHER" id="PTHR21137">
    <property type="entry name" value="ODORANT RECEPTOR"/>
    <property type="match status" value="1"/>
</dbReference>
<dbReference type="PANTHER" id="PTHR21137:SF37">
    <property type="entry name" value="ODORANT RECEPTOR 46A, ISOFORM B-RELATED"/>
    <property type="match status" value="1"/>
</dbReference>
<dbReference type="Pfam" id="PF02949">
    <property type="entry name" value="7tm_6"/>
    <property type="match status" value="1"/>
</dbReference>
<accession>Q9VCS8</accession>
<feature type="chain" id="PRO_0000174283" description="Odorant receptor 94b">
    <location>
        <begin position="1"/>
        <end position="383"/>
    </location>
</feature>
<feature type="topological domain" description="Cytoplasmic" evidence="2">
    <location>
        <begin position="1"/>
        <end position="41"/>
    </location>
</feature>
<feature type="transmembrane region" description="Helical; Name=1" evidence="2">
    <location>
        <begin position="42"/>
        <end position="62"/>
    </location>
</feature>
<feature type="topological domain" description="Extracellular" evidence="2">
    <location>
        <begin position="63"/>
        <end position="70"/>
    </location>
</feature>
<feature type="transmembrane region" description="Helical; Name=2" evidence="2">
    <location>
        <begin position="71"/>
        <end position="91"/>
    </location>
</feature>
<feature type="topological domain" description="Cytoplasmic" evidence="2">
    <location>
        <begin position="92"/>
        <end position="130"/>
    </location>
</feature>
<feature type="transmembrane region" description="Helical; Name=3" evidence="2">
    <location>
        <begin position="131"/>
        <end position="151"/>
    </location>
</feature>
<feature type="topological domain" description="Extracellular" evidence="2">
    <location>
        <begin position="152"/>
        <end position="174"/>
    </location>
</feature>
<feature type="transmembrane region" description="Helical; Name=4" evidence="2">
    <location>
        <begin position="175"/>
        <end position="195"/>
    </location>
</feature>
<feature type="topological domain" description="Cytoplasmic" evidence="2">
    <location>
        <begin position="196"/>
        <end position="250"/>
    </location>
</feature>
<feature type="transmembrane region" description="Helical; Name=5" evidence="2">
    <location>
        <begin position="251"/>
        <end position="271"/>
    </location>
</feature>
<feature type="topological domain" description="Extracellular" evidence="2">
    <location>
        <begin position="272"/>
        <end position="284"/>
    </location>
</feature>
<feature type="transmembrane region" description="Helical; Name=6" evidence="2">
    <location>
        <begin position="285"/>
        <end position="305"/>
    </location>
</feature>
<feature type="topological domain" description="Cytoplasmic" evidence="2">
    <location>
        <begin position="306"/>
        <end position="358"/>
    </location>
</feature>
<feature type="transmembrane region" description="Helical; Name=7" evidence="2">
    <location>
        <begin position="359"/>
        <end position="379"/>
    </location>
</feature>
<feature type="topological domain" description="Extracellular" evidence="2">
    <location>
        <begin position="380"/>
        <end position="383"/>
    </location>
</feature>